<gene>
    <name type="primary">cldng</name>
</gene>
<sequence length="209" mass="22091">MSTGLQLLGTTLGTLGWLGIIISCAIPLWRVTAFIGNNIVTAQTMWEGLWMSCVVQSTGQMQCKVYDSMLALAQDLQASRAILVISAIVGLIAMFASFAGGKCTNCLADNSAKALVATTGGVAFIIAGILGLVPPSWTANTIIRDFYNPLVAEAQKREFGAAIFICWGAAVLLVIGGGLLCSSYPKGRTSSRGRYTPASQNGRERSEYV</sequence>
<name>CLDZ_DANRE</name>
<organism>
    <name type="scientific">Danio rerio</name>
    <name type="common">Zebrafish</name>
    <name type="synonym">Brachydanio rerio</name>
    <dbReference type="NCBI Taxonomy" id="7955"/>
    <lineage>
        <taxon>Eukaryota</taxon>
        <taxon>Metazoa</taxon>
        <taxon>Chordata</taxon>
        <taxon>Craniata</taxon>
        <taxon>Vertebrata</taxon>
        <taxon>Euteleostomi</taxon>
        <taxon>Actinopterygii</taxon>
        <taxon>Neopterygii</taxon>
        <taxon>Teleostei</taxon>
        <taxon>Ostariophysi</taxon>
        <taxon>Cypriniformes</taxon>
        <taxon>Danionidae</taxon>
        <taxon>Danioninae</taxon>
        <taxon>Danio</taxon>
    </lineage>
</organism>
<dbReference type="EMBL" id="AJ011790">
    <property type="protein sequence ID" value="CAA09778.1"/>
    <property type="molecule type" value="mRNA"/>
</dbReference>
<dbReference type="EMBL" id="BC129263">
    <property type="protein sequence ID" value="AAI29264.1"/>
    <property type="molecule type" value="mRNA"/>
</dbReference>
<dbReference type="RefSeq" id="NP_851296.1">
    <property type="nucleotide sequence ID" value="NM_180965.5"/>
</dbReference>
<dbReference type="RefSeq" id="XP_068076971.1">
    <property type="nucleotide sequence ID" value="XM_068220870.1"/>
</dbReference>
<dbReference type="SMR" id="Q9YH90"/>
<dbReference type="FunCoup" id="Q9YH90">
    <property type="interactions" value="345"/>
</dbReference>
<dbReference type="STRING" id="7955.ENSDARP00000015898"/>
<dbReference type="PaxDb" id="7955-ENSDARP00000015898"/>
<dbReference type="Ensembl" id="ENSDART00000015547">
    <property type="protein sequence ID" value="ENSDARP00000015898"/>
    <property type="gene ID" value="ENSDARG00000003701"/>
</dbReference>
<dbReference type="Ensembl" id="ENSDART00000192758">
    <property type="protein sequence ID" value="ENSDARP00000153981"/>
    <property type="gene ID" value="ENSDARG00000003701"/>
</dbReference>
<dbReference type="GeneID" id="81586"/>
<dbReference type="KEGG" id="dre:81586"/>
<dbReference type="AGR" id="ZFIN:ZDB-GENE-010328-7"/>
<dbReference type="CTD" id="81586"/>
<dbReference type="ZFIN" id="ZDB-GENE-010328-7">
    <property type="gene designation" value="cldng"/>
</dbReference>
<dbReference type="HOGENOM" id="CLU_076370_1_2_1"/>
<dbReference type="InParanoid" id="Q9YH90"/>
<dbReference type="OMA" id="MSAGLQM"/>
<dbReference type="OrthoDB" id="8830244at2759"/>
<dbReference type="PhylomeDB" id="Q9YH90"/>
<dbReference type="TreeFam" id="TF331936"/>
<dbReference type="PRO" id="PR:Q9YH90"/>
<dbReference type="Proteomes" id="UP000000437">
    <property type="component" value="Chromosome 1"/>
</dbReference>
<dbReference type="Bgee" id="ENSDARG00000003701">
    <property type="expression patterns" value="Expressed in mature ovarian follicle and 26 other cell types or tissues"/>
</dbReference>
<dbReference type="ExpressionAtlas" id="Q9YH90">
    <property type="expression patterns" value="baseline and differential"/>
</dbReference>
<dbReference type="GO" id="GO:0005923">
    <property type="term" value="C:bicellular tight junction"/>
    <property type="evidence" value="ECO:0000250"/>
    <property type="project" value="UniProtKB"/>
</dbReference>
<dbReference type="GO" id="GO:0005886">
    <property type="term" value="C:plasma membrane"/>
    <property type="evidence" value="ECO:0000318"/>
    <property type="project" value="GO_Central"/>
</dbReference>
<dbReference type="GO" id="GO:0042802">
    <property type="term" value="F:identical protein binding"/>
    <property type="evidence" value="ECO:0000250"/>
    <property type="project" value="UniProtKB"/>
</dbReference>
<dbReference type="GO" id="GO:0005198">
    <property type="term" value="F:structural molecule activity"/>
    <property type="evidence" value="ECO:0007669"/>
    <property type="project" value="InterPro"/>
</dbReference>
<dbReference type="GO" id="GO:0070830">
    <property type="term" value="P:bicellular tight junction assembly"/>
    <property type="evidence" value="ECO:0000318"/>
    <property type="project" value="GO_Central"/>
</dbReference>
<dbReference type="GO" id="GO:0016338">
    <property type="term" value="P:calcium-independent cell-cell adhesion via plasma membrane cell-adhesion molecules"/>
    <property type="evidence" value="ECO:0000250"/>
    <property type="project" value="UniProtKB"/>
</dbReference>
<dbReference type="GO" id="GO:0007155">
    <property type="term" value="P:cell adhesion"/>
    <property type="evidence" value="ECO:0000318"/>
    <property type="project" value="GO_Central"/>
</dbReference>
<dbReference type="FunFam" id="1.20.140.150:FF:000001">
    <property type="entry name" value="Claudin"/>
    <property type="match status" value="1"/>
</dbReference>
<dbReference type="Gene3D" id="1.20.140.150">
    <property type="match status" value="1"/>
</dbReference>
<dbReference type="InterPro" id="IPR006187">
    <property type="entry name" value="Claudin"/>
</dbReference>
<dbReference type="InterPro" id="IPR017974">
    <property type="entry name" value="Claudin_CS"/>
</dbReference>
<dbReference type="InterPro" id="IPR004031">
    <property type="entry name" value="PMP22/EMP/MP20/Claudin"/>
</dbReference>
<dbReference type="PANTHER" id="PTHR12002">
    <property type="entry name" value="CLAUDIN"/>
    <property type="match status" value="1"/>
</dbReference>
<dbReference type="Pfam" id="PF00822">
    <property type="entry name" value="PMP22_Claudin"/>
    <property type="match status" value="1"/>
</dbReference>
<dbReference type="PRINTS" id="PR01077">
    <property type="entry name" value="CLAUDIN"/>
</dbReference>
<dbReference type="PROSITE" id="PS01346">
    <property type="entry name" value="CLAUDIN"/>
    <property type="match status" value="1"/>
</dbReference>
<protein>
    <recommendedName>
        <fullName>Claudin-like protein ZF-A9</fullName>
    </recommendedName>
    <alternativeName>
        <fullName>Claudin g</fullName>
    </alternativeName>
</protein>
<keyword id="KW-0965">Cell junction</keyword>
<keyword id="KW-1003">Cell membrane</keyword>
<keyword id="KW-0472">Membrane</keyword>
<keyword id="KW-1185">Reference proteome</keyword>
<keyword id="KW-0796">Tight junction</keyword>
<keyword id="KW-0812">Transmembrane</keyword>
<keyword id="KW-1133">Transmembrane helix</keyword>
<accession>Q9YH90</accession>
<accession>A1L1Y2</accession>
<comment type="function">
    <text>Component of tight junction (TJ) strands.</text>
</comment>
<comment type="subcellular location">
    <subcellularLocation>
        <location>Cell membrane</location>
        <topology>Multi-pass membrane protein</topology>
    </subcellularLocation>
    <subcellularLocation>
        <location>Cell junction</location>
        <location>Tight junction</location>
    </subcellularLocation>
</comment>
<comment type="similarity">
    <text evidence="3">Belongs to the claudin family.</text>
</comment>
<proteinExistence type="evidence at transcript level"/>
<reference key="1">
    <citation type="submission" date="1998-10" db="EMBL/GenBank/DDBJ databases">
        <authorList>
            <person name="Keen T.J."/>
            <person name="Inglehearn C.F."/>
        </authorList>
    </citation>
    <scope>NUCLEOTIDE SEQUENCE [MRNA]</scope>
</reference>
<reference key="2">
    <citation type="submission" date="2006-12" db="EMBL/GenBank/DDBJ databases">
        <authorList>
            <consortium name="NIH - Zebrafish Gene Collection (ZGC) project"/>
        </authorList>
    </citation>
    <scope>NUCLEOTIDE SEQUENCE [LARGE SCALE MRNA]</scope>
    <source>
        <strain>AB</strain>
    </source>
</reference>
<feature type="chain" id="PRO_0000144791" description="Claudin-like protein ZF-A9">
    <location>
        <begin position="1"/>
        <end position="209"/>
    </location>
</feature>
<feature type="transmembrane region" description="Helical" evidence="1">
    <location>
        <begin position="8"/>
        <end position="28"/>
    </location>
</feature>
<feature type="transmembrane region" description="Helical" evidence="1">
    <location>
        <begin position="81"/>
        <end position="101"/>
    </location>
</feature>
<feature type="transmembrane region" description="Helical" evidence="1">
    <location>
        <begin position="114"/>
        <end position="134"/>
    </location>
</feature>
<feature type="transmembrane region" description="Helical" evidence="1">
    <location>
        <begin position="159"/>
        <end position="179"/>
    </location>
</feature>
<feature type="region of interest" description="Disordered" evidence="2">
    <location>
        <begin position="187"/>
        <end position="209"/>
    </location>
</feature>
<feature type="compositionally biased region" description="Polar residues" evidence="2">
    <location>
        <begin position="188"/>
        <end position="201"/>
    </location>
</feature>
<evidence type="ECO:0000255" key="1"/>
<evidence type="ECO:0000256" key="2">
    <source>
        <dbReference type="SAM" id="MobiDB-lite"/>
    </source>
</evidence>
<evidence type="ECO:0000305" key="3"/>